<gene>
    <name evidence="6" type="primary">RSL1</name>
    <name evidence="5" type="synonym">BHLH86</name>
    <name evidence="7" type="synonym">EN113</name>
    <name evidence="8" type="ordered locus">At5g37800</name>
    <name evidence="9" type="ORF">K22F20.8</name>
</gene>
<accession>Q9FJ00</accession>
<evidence type="ECO:0000255" key="1">
    <source>
        <dbReference type="PROSITE-ProRule" id="PRU00981"/>
    </source>
</evidence>
<evidence type="ECO:0000256" key="2">
    <source>
        <dbReference type="SAM" id="MobiDB-lite"/>
    </source>
</evidence>
<evidence type="ECO:0000269" key="3">
    <source>
    </source>
</evidence>
<evidence type="ECO:0000269" key="4">
    <source>
    </source>
</evidence>
<evidence type="ECO:0000303" key="5">
    <source>
    </source>
</evidence>
<evidence type="ECO:0000303" key="6">
    <source>
    </source>
</evidence>
<evidence type="ECO:0000305" key="7"/>
<evidence type="ECO:0000312" key="8">
    <source>
        <dbReference type="Araport" id="AT5G37800"/>
    </source>
</evidence>
<evidence type="ECO:0000312" key="9">
    <source>
        <dbReference type="EMBL" id="BAB10359.1"/>
    </source>
</evidence>
<keyword id="KW-0238">DNA-binding</keyword>
<keyword id="KW-0539">Nucleus</keyword>
<keyword id="KW-1185">Reference proteome</keyword>
<keyword id="KW-0804">Transcription</keyword>
<keyword id="KW-0805">Transcription regulation</keyword>
<protein>
    <recommendedName>
        <fullName evidence="7">Putative transcription factor bHLH086</fullName>
    </recommendedName>
    <alternativeName>
        <fullName evidence="5">Basic helix-loop-helix protein 86</fullName>
        <shortName evidence="5">AtbHLH86</shortName>
        <shortName evidence="5">bHLH 86</shortName>
    </alternativeName>
    <alternativeName>
        <fullName evidence="6">Protein ROOT HAIR DEFECTIVE 6-LIKE 1</fullName>
        <shortName evidence="6">AtRSL1</shortName>
        <shortName evidence="6">Protein RHD SIX-LIKE 1</shortName>
    </alternativeName>
    <alternativeName>
        <fullName evidence="7">Transcription factor EN 113</fullName>
    </alternativeName>
    <alternativeName>
        <fullName evidence="5">bHLH transcription factor bHLH086</fullName>
    </alternativeName>
</protein>
<reference key="1">
    <citation type="journal article" date="1998" name="DNA Res.">
        <title>Structural analysis of Arabidopsis thaliana chromosome 5. VII. Sequence features of the regions of 1,013,767 bp covered by sixteen physically assigned P1 and TAC clones.</title>
        <authorList>
            <person name="Nakamura Y."/>
            <person name="Sato S."/>
            <person name="Asamizu E."/>
            <person name="Kaneko T."/>
            <person name="Kotani H."/>
            <person name="Miyajima N."/>
            <person name="Tabata S."/>
        </authorList>
    </citation>
    <scope>NUCLEOTIDE SEQUENCE [LARGE SCALE GENOMIC DNA]</scope>
    <source>
        <strain>cv. Columbia</strain>
    </source>
</reference>
<reference key="2">
    <citation type="journal article" date="2017" name="Plant J.">
        <title>Araport11: a complete reannotation of the Arabidopsis thaliana reference genome.</title>
        <authorList>
            <person name="Cheng C.Y."/>
            <person name="Krishnakumar V."/>
            <person name="Chan A.P."/>
            <person name="Thibaud-Nissen F."/>
            <person name="Schobel S."/>
            <person name="Town C.D."/>
        </authorList>
    </citation>
    <scope>GENOME REANNOTATION</scope>
    <source>
        <strain>cv. Columbia</strain>
    </source>
</reference>
<reference key="3">
    <citation type="journal article" date="2003" name="Mol. Biol. Evol.">
        <title>The basic helix-loop-helix transcription factor family in plants: a genome-wide study of protein structure and functional diversity.</title>
        <authorList>
            <person name="Heim M.A."/>
            <person name="Jakoby M."/>
            <person name="Werber M."/>
            <person name="Martin C."/>
            <person name="Weisshaar B."/>
            <person name="Bailey P.C."/>
        </authorList>
    </citation>
    <scope>GENE FAMILY</scope>
    <scope>NOMENCLATURE</scope>
</reference>
<reference key="4">
    <citation type="journal article" date="2003" name="Plant Cell">
        <title>The Arabidopsis basic/helix-loop-helix transcription factor family.</title>
        <authorList>
            <person name="Toledo-Ortiz G."/>
            <person name="Huq E."/>
            <person name="Quail P.H."/>
        </authorList>
    </citation>
    <scope>GENE FAMILY</scope>
</reference>
<reference key="5">
    <citation type="journal article" date="2003" name="Plant Cell">
        <title>Update on the basic helix-loop-helix transcription factor gene family in Arabidopsis thaliana.</title>
        <authorList>
            <person name="Bailey P.C."/>
            <person name="Martin C."/>
            <person name="Toledo-Ortiz G."/>
            <person name="Quail P.H."/>
            <person name="Huq E."/>
            <person name="Heim M.A."/>
            <person name="Jakoby M."/>
            <person name="Werber M."/>
            <person name="Weisshaar B."/>
        </authorList>
    </citation>
    <scope>GENE FAMILY</scope>
    <scope>NOMENCLATURE</scope>
</reference>
<reference key="6">
    <citation type="journal article" date="2007" name="Science">
        <title>An ancient mechanism controls the development of cells with a rooting function in land plants.</title>
        <authorList>
            <person name="Menand B."/>
            <person name="Yi K."/>
            <person name="Jouannic S."/>
            <person name="Hoffmann L."/>
            <person name="Ryan E."/>
            <person name="Linstead P."/>
            <person name="Schaefer D.G."/>
            <person name="Dolan L."/>
        </authorList>
    </citation>
    <scope>FUNCTION</scope>
    <scope>SUBCELLULAR LOCATION</scope>
    <scope>DISRUPTION PHENOTYPE</scope>
</reference>
<reference key="7">
    <citation type="journal article" date="2020" name="Plant Cell">
        <title>Arabidopsis JAZ proteins interact with and suppress RHD6 transcription factor to regulate jasmonate-stimulated root hair development.</title>
        <authorList>
            <person name="Han X."/>
            <person name="Zhang M."/>
            <person name="Yang M."/>
            <person name="Hu Y."/>
        </authorList>
    </citation>
    <scope>FUNCTION</scope>
    <scope>INTERACTION WITH RHD6; TIFY10B/JAZ2; TIFY6A/JAZ4; TIFY5A/JAZ8; TIFY7/JAZ9 AND TIFY9/JAZ10</scope>
    <scope>SUBCELLULAR LOCATION</scope>
    <scope>INDUCTION BY JASMONATE</scope>
</reference>
<dbReference type="EMBL" id="AB016873">
    <property type="protein sequence ID" value="BAB10359.1"/>
    <property type="status" value="ALT_SEQ"/>
    <property type="molecule type" value="Genomic_DNA"/>
</dbReference>
<dbReference type="EMBL" id="CP002688">
    <property type="protein sequence ID" value="AED94234.1"/>
    <property type="molecule type" value="Genomic_DNA"/>
</dbReference>
<dbReference type="RefSeq" id="NP_198596.1">
    <property type="nucleotide sequence ID" value="NM_123139.2"/>
</dbReference>
<dbReference type="SMR" id="Q9FJ00"/>
<dbReference type="BioGRID" id="19009">
    <property type="interactions" value="7"/>
</dbReference>
<dbReference type="FunCoup" id="Q9FJ00">
    <property type="interactions" value="126"/>
</dbReference>
<dbReference type="IntAct" id="Q9FJ00">
    <property type="interactions" value="6"/>
</dbReference>
<dbReference type="STRING" id="3702.Q9FJ00"/>
<dbReference type="PaxDb" id="3702-AT5G37800.1"/>
<dbReference type="EnsemblPlants" id="AT5G37800.1">
    <property type="protein sequence ID" value="AT5G37800.1"/>
    <property type="gene ID" value="AT5G37800"/>
</dbReference>
<dbReference type="GeneID" id="833758"/>
<dbReference type="Gramene" id="AT5G37800.1">
    <property type="protein sequence ID" value="AT5G37800.1"/>
    <property type="gene ID" value="AT5G37800"/>
</dbReference>
<dbReference type="KEGG" id="ath:AT5G37800"/>
<dbReference type="Araport" id="AT5G37800"/>
<dbReference type="TAIR" id="AT5G37800">
    <property type="gene designation" value="RSL1"/>
</dbReference>
<dbReference type="eggNOG" id="ENOG502QT4N">
    <property type="taxonomic scope" value="Eukaryota"/>
</dbReference>
<dbReference type="HOGENOM" id="CLU_072935_0_0_1"/>
<dbReference type="InParanoid" id="Q9FJ00"/>
<dbReference type="OMA" id="PATNHGN"/>
<dbReference type="OrthoDB" id="687495at2759"/>
<dbReference type="PhylomeDB" id="Q9FJ00"/>
<dbReference type="PRO" id="PR:Q9FJ00"/>
<dbReference type="Proteomes" id="UP000006548">
    <property type="component" value="Chromosome 5"/>
</dbReference>
<dbReference type="ExpressionAtlas" id="Q9FJ00">
    <property type="expression patterns" value="baseline and differential"/>
</dbReference>
<dbReference type="GO" id="GO:0005634">
    <property type="term" value="C:nucleus"/>
    <property type="evidence" value="ECO:0007669"/>
    <property type="project" value="UniProtKB-SubCell"/>
</dbReference>
<dbReference type="GO" id="GO:0003677">
    <property type="term" value="F:DNA binding"/>
    <property type="evidence" value="ECO:0007669"/>
    <property type="project" value="UniProtKB-KW"/>
</dbReference>
<dbReference type="GO" id="GO:0003700">
    <property type="term" value="F:DNA-binding transcription factor activity"/>
    <property type="evidence" value="ECO:0000250"/>
    <property type="project" value="TAIR"/>
</dbReference>
<dbReference type="GO" id="GO:0046983">
    <property type="term" value="F:protein dimerization activity"/>
    <property type="evidence" value="ECO:0007669"/>
    <property type="project" value="InterPro"/>
</dbReference>
<dbReference type="GO" id="GO:0006355">
    <property type="term" value="P:regulation of DNA-templated transcription"/>
    <property type="evidence" value="ECO:0000304"/>
    <property type="project" value="TAIR"/>
</dbReference>
<dbReference type="GO" id="GO:0048766">
    <property type="term" value="P:root hair initiation"/>
    <property type="evidence" value="ECO:0000316"/>
    <property type="project" value="TAIR"/>
</dbReference>
<dbReference type="CDD" id="cd11454">
    <property type="entry name" value="bHLH_AtIND_like"/>
    <property type="match status" value="1"/>
</dbReference>
<dbReference type="FunFam" id="4.10.280.10:FF:000046">
    <property type="entry name" value="Transcription factor bHLH83"/>
    <property type="match status" value="1"/>
</dbReference>
<dbReference type="Gene3D" id="4.10.280.10">
    <property type="entry name" value="Helix-loop-helix DNA-binding domain"/>
    <property type="match status" value="1"/>
</dbReference>
<dbReference type="InterPro" id="IPR011598">
    <property type="entry name" value="bHLH_dom"/>
</dbReference>
<dbReference type="InterPro" id="IPR036638">
    <property type="entry name" value="HLH_DNA-bd_sf"/>
</dbReference>
<dbReference type="InterPro" id="IPR045843">
    <property type="entry name" value="IND-like"/>
</dbReference>
<dbReference type="PANTHER" id="PTHR45914:SF59">
    <property type="entry name" value="TRANSCRIPTION FACTOR BHLH83-LIKE"/>
    <property type="match status" value="1"/>
</dbReference>
<dbReference type="PANTHER" id="PTHR45914">
    <property type="entry name" value="TRANSCRIPTION FACTOR HEC3-RELATED"/>
    <property type="match status" value="1"/>
</dbReference>
<dbReference type="Pfam" id="PF00010">
    <property type="entry name" value="HLH"/>
    <property type="match status" value="1"/>
</dbReference>
<dbReference type="SMART" id="SM00353">
    <property type="entry name" value="HLH"/>
    <property type="match status" value="1"/>
</dbReference>
<dbReference type="SUPFAM" id="SSF47459">
    <property type="entry name" value="HLH, helix-loop-helix DNA-binding domain"/>
    <property type="match status" value="1"/>
</dbReference>
<dbReference type="PROSITE" id="PS50888">
    <property type="entry name" value="BHLH"/>
    <property type="match status" value="1"/>
</dbReference>
<organism>
    <name type="scientific">Arabidopsis thaliana</name>
    <name type="common">Mouse-ear cress</name>
    <dbReference type="NCBI Taxonomy" id="3702"/>
    <lineage>
        <taxon>Eukaryota</taxon>
        <taxon>Viridiplantae</taxon>
        <taxon>Streptophyta</taxon>
        <taxon>Embryophyta</taxon>
        <taxon>Tracheophyta</taxon>
        <taxon>Spermatophyta</taxon>
        <taxon>Magnoliopsida</taxon>
        <taxon>eudicotyledons</taxon>
        <taxon>Gunneridae</taxon>
        <taxon>Pentapetalae</taxon>
        <taxon>rosids</taxon>
        <taxon>malvids</taxon>
        <taxon>Brassicales</taxon>
        <taxon>Brassicaceae</taxon>
        <taxon>Camelineae</taxon>
        <taxon>Arabidopsis</taxon>
    </lineage>
</organism>
<comment type="function">
    <text evidence="3 4">Transcription factor that is specifically required for the development of root hairs (PubMed:17556585). Acts with RHD6 to positively regulate root hair development (PubMed:17556585). Acts downstream of genes that regulate epidermal pattern formation, such as GL2 (PubMed:17556585). Acts with RHD6 as transcription factor that integrates a jasmonate (JA) signaling pathway that stimulates root hair growth (PubMed:31988260).</text>
</comment>
<comment type="subunit">
    <text evidence="4 7">Homodimer (Probable). Forms heterodimers with RHD6 (PubMed:31988260). Interacts with TIFY10B/JAZ2, TIFY6A/JAZ4, TIFY5A/JAZ8, TIFY7/JAZ9 and TIFY9/JAZ10 (PubMed:31988260).</text>
</comment>
<comment type="subcellular location">
    <subcellularLocation>
        <location evidence="1 3 4">Nucleus</location>
    </subcellularLocation>
</comment>
<comment type="induction">
    <text evidence="4">Induced by jasmonate (JA) treatment.</text>
</comment>
<comment type="disruption phenotype">
    <text evidence="3">No visible phenotype under normal growth conditions, but the double mutant seedlings rhd6-3 and rsl1-1 do not develop root hairs.</text>
</comment>
<comment type="sequence caution" evidence="7">
    <conflict type="erroneous gene model prediction">
        <sequence resource="EMBL-CDS" id="BAB10359"/>
    </conflict>
</comment>
<feature type="chain" id="PRO_0000358778" description="Putative transcription factor bHLH086">
    <location>
        <begin position="1"/>
        <end position="307"/>
    </location>
</feature>
<feature type="domain" description="bHLH" evidence="1">
    <location>
        <begin position="207"/>
        <end position="256"/>
    </location>
</feature>
<feature type="region of interest" description="Disordered" evidence="2">
    <location>
        <begin position="1"/>
        <end position="49"/>
    </location>
</feature>
<feature type="region of interest" description="Disordered" evidence="2">
    <location>
        <begin position="167"/>
        <end position="215"/>
    </location>
</feature>
<feature type="region of interest" description="Basic motif" evidence="1">
    <location>
        <begin position="207"/>
        <end position="220"/>
    </location>
</feature>
<feature type="region of interest" description="Helix-loop-helix motif" evidence="1">
    <location>
        <begin position="221"/>
        <end position="256"/>
    </location>
</feature>
<feature type="compositionally biased region" description="Polar residues" evidence="2">
    <location>
        <begin position="12"/>
        <end position="28"/>
    </location>
</feature>
<feature type="compositionally biased region" description="Polar residues" evidence="2">
    <location>
        <begin position="183"/>
        <end position="197"/>
    </location>
</feature>
<sequence length="307" mass="33326">MSLINEHCNERNYISTPNSSEDLSSPQNCGLDEGASASSSSTINSDHQNNQGFVFYPSGETIEDHNSLMDFNASSFFTFDNHRSLISPVTNGGAFPVVDGNMSYSYDGWSHHQVDSISPRVIKTPNSFETTSSFGLTSNSMSKPATNHGNGDWLYSGSTIVNIGSRHESTSPKLAGNKRPFTGENTQLSKKPSSGTNGKIKPKATTSPKDPQSLAAKNRRERISERLKVLQELVPNGTKVDLVTMLEKAIGYVKFLQVQVKVLAADEFWPAQGGKAPDISQVKEAIDAILSSSQRDSNSTRETSIAE</sequence>
<name>RSL1_ARATH</name>
<proteinExistence type="evidence at protein level"/>